<evidence type="ECO:0000255" key="1">
    <source>
        <dbReference type="HAMAP-Rule" id="MF_04007"/>
    </source>
</evidence>
<accession>P11870</accession>
<accession>Q5PPC5</accession>
<proteinExistence type="inferred from homology"/>
<feature type="chain" id="PRO_0000116281" description="Major DNA-binding protein">
    <location>
        <begin position="1"/>
        <end position="1175"/>
    </location>
</feature>
<feature type="zinc finger region" evidence="1">
    <location>
        <begin position="496"/>
        <end position="509"/>
    </location>
</feature>
<feature type="region of interest" description="Required for nuclear localization" evidence="1">
    <location>
        <begin position="1151"/>
        <end position="1175"/>
    </location>
</feature>
<feature type="short sequence motif" description="Required for filament formation" evidence="1">
    <location>
        <begin position="825"/>
        <end position="826"/>
    </location>
</feature>
<protein>
    <recommendedName>
        <fullName evidence="1">Major DNA-binding protein</fullName>
    </recommendedName>
</protein>
<comment type="function">
    <text evidence="1">Plays several crucial roles in viral infection. Participates in the opening of the viral DNA origin to initiate replication by interacting with the origin-binding protein. May disrupt loops, hairpins and other secondary structures present on ssDNA to reduce and eliminate pausing of viral DNA polymerase at specific sites during elongation. Promotes viral DNA recombination by performing strand-transfer, characterized by the ability to transfer a DNA strand from a linear duplex to a complementary single-stranded DNA circle. Can also catalyze the renaturation of complementary single strands. Additionally, reorganizes the host cell nucleus, leading to the formation of prereplicative sites and replication compartments. This process is driven by the protein which can form double-helical filaments in the absence of DNA.</text>
</comment>
<comment type="subunit">
    <text evidence="1">Homooligomers. Forms double-helical filaments necessary for the formation of replication compartments within the host nucleus. Interacts with the origin-binding protein. Interacts with the helicase primase complex; this interaction stimulates primer synthesis activity of the helicase-primase complex. Interacts with the DNA polymerase. Interacts with the alkaline exonuclease; this interaction increases its nuclease processivity.</text>
</comment>
<comment type="subcellular location">
    <subcellularLocation>
        <location evidence="1">Host nucleus</location>
    </subcellularLocation>
    <text evidence="1">In the absence of DNA replication, found in the nuclear framework-associated structures (prereplicative sites). As viral DNA replication proceeds, it migrates to globular intranuclear structures (replication compartments).</text>
</comment>
<comment type="similarity">
    <text evidence="1">Belongs to the herpesviridae major DNA-binding protein family.</text>
</comment>
<organism>
    <name type="scientific">Suid herpesvirus 1</name>
    <name type="common">SuHV-1</name>
    <name type="synonym">Pseudorabies virus</name>
    <dbReference type="NCBI Taxonomy" id="10345"/>
    <lineage>
        <taxon>Viruses</taxon>
        <taxon>Duplodnaviria</taxon>
        <taxon>Heunggongvirae</taxon>
        <taxon>Peploviricota</taxon>
        <taxon>Herviviricetes</taxon>
        <taxon>Herpesvirales</taxon>
        <taxon>Orthoherpesviridae</taxon>
        <taxon>Alphaherpesvirinae</taxon>
        <taxon>Varicellovirus</taxon>
        <taxon>Varicellovirus suidalpha1</taxon>
    </lineage>
</organism>
<keyword id="KW-0235">DNA replication</keyword>
<keyword id="KW-0238">DNA-binding</keyword>
<keyword id="KW-1048">Host nucleus</keyword>
<keyword id="KW-0479">Metal-binding</keyword>
<keyword id="KW-1185">Reference proteome</keyword>
<keyword id="KW-0862">Zinc</keyword>
<keyword id="KW-0863">Zinc-finger</keyword>
<name>DNBI_SUHV</name>
<sequence length="1175" mass="125351">MEAAAKTVTVRAAPLGYVYVTPIEALRRDLLALLVARSADDAAAVAPLVRGLTVEAGFAGHVAVVAGARTTGLGGGLTLKLTPNHFHPNVFFFHNGDCVPPSSAAPALSRACEAARARFGFSAYRTPVDNAEETTGAEVCARLGLAADAHAAYLVVADGFKEAVYLCNAFLHYGGAGTVSINGHEAWRVPLYPVHLFMPDVNRLVADPFNAKNRSISEEFVYPRPFFNGPLCRLLHGYVLGPAAVATRVRNLDAVARGAAHLAFDENHESAVLPADVTFTLFEQRRRGGDAAAGGLERRMASVMSADAALSLEALVAAGVYDEEPPALDDWPVLSEAGAKDGGAAAASAGAPVSQAAALGAYVSRAAGLVGALVFSSNSVLYLTEVDDAGAADARKEGAGPSFNRFYQVAAPYLAGNPQTDKDGRVLLHTASQPATAPGNHDFAMDHLVMACGFCPQLLARVLFYLERCDAGTFVGRGDVDAVRYVAGSLDAEVPCSLCDRASRPACAHTTLHRLRHRSRASARRRSPMGVFGTMNSAYSDCDVLGNYASYGALKRPNDSEPPKAIMQDTYRAAVDRLLADVAGARIGETVTDHAGFRHALRALRDTVEQAADRFVRTLVETRDFKLRDALYDANHTMSLSLDPYSGALCPATSFLARRTLLAVLQDLALSQCHGVLHGQPVEGRNFRNQFQPVLRRRVVDMLNGGFVTAKTVTVTLADGIVAPDPTKGSAEPPARDHDGDLARVSFEVLRELRVKSRVMFSTGSGSLSDAARARVAGLAGAYQRPDTAVDVLNGPLGFLLKQHHATLFPRGKPPGGQSPNPQWFWTLLQRNQLPARLLTKDDIETIAAVKRFSVDYGAINYVNLTPGTVAELAQFYLANLILRYCDHKQFFINSLTGITMQSKRPRDPAAVMAWVRRPLADAADAERAAREVLDAPRDDTWVATYTSSHLLRSVMASRPLVVLGLGVSKYHGMAGNNRVFQAGNWSGLNGGKHVCPLMVFDRTRHFVLACPRVGFTCSQTGGGAGLHDHSLGEHVKTILADGGPLVQTAVYAAVLHALGARTQHLEPDDWRAIVDDEFLAAALAEINGRVADRDGRWSVEAAAELVRDLEGQTGADGGEETAFDFGACGAGGDVAGLAPASLVPAELGGKRPPPEDDLFDMGAPPEKRLTFDML</sequence>
<dbReference type="EMBL" id="BK001744">
    <property type="protein sequence ID" value="DAA02152.1"/>
    <property type="molecule type" value="Genomic_DNA"/>
</dbReference>
<dbReference type="EMBL" id="X14573">
    <property type="protein sequence ID" value="CAA32711.1"/>
    <property type="molecule type" value="Genomic_DNA"/>
</dbReference>
<dbReference type="PIR" id="S04145">
    <property type="entry name" value="S04145"/>
</dbReference>
<dbReference type="RefSeq" id="YP_068332.1">
    <property type="nucleotide sequence ID" value="NC_006151.1"/>
</dbReference>
<dbReference type="SMR" id="P11870"/>
<dbReference type="GeneID" id="2952495"/>
<dbReference type="KEGG" id="vg:2952495"/>
<dbReference type="Proteomes" id="UP000165522">
    <property type="component" value="Genome"/>
</dbReference>
<dbReference type="GO" id="GO:0042025">
    <property type="term" value="C:host cell nucleus"/>
    <property type="evidence" value="ECO:0007669"/>
    <property type="project" value="UniProtKB-SubCell"/>
</dbReference>
<dbReference type="GO" id="GO:0003697">
    <property type="term" value="F:single-stranded DNA binding"/>
    <property type="evidence" value="ECO:0007669"/>
    <property type="project" value="InterPro"/>
</dbReference>
<dbReference type="GO" id="GO:0008270">
    <property type="term" value="F:zinc ion binding"/>
    <property type="evidence" value="ECO:0007669"/>
    <property type="project" value="UniProtKB-KW"/>
</dbReference>
<dbReference type="GO" id="GO:0006260">
    <property type="term" value="P:DNA replication"/>
    <property type="evidence" value="ECO:0007669"/>
    <property type="project" value="UniProtKB-KW"/>
</dbReference>
<dbReference type="FunFam" id="1.20.190.40:FF:000001">
    <property type="entry name" value="Major DNA-binding protein"/>
    <property type="match status" value="1"/>
</dbReference>
<dbReference type="FunFam" id="1.20.190.40:FF:000002">
    <property type="entry name" value="Major DNA-binding protein"/>
    <property type="match status" value="1"/>
</dbReference>
<dbReference type="Gene3D" id="1.10.150.560">
    <property type="match status" value="1"/>
</dbReference>
<dbReference type="Gene3D" id="1.20.190.40">
    <property type="entry name" value="Viral ssDNA binding protein, head domain"/>
    <property type="match status" value="2"/>
</dbReference>
<dbReference type="HAMAP" id="MF_04007">
    <property type="entry name" value="HSV_DNBI"/>
    <property type="match status" value="1"/>
</dbReference>
<dbReference type="InterPro" id="IPR035989">
    <property type="entry name" value="DBP_sf"/>
</dbReference>
<dbReference type="InterPro" id="IPR043031">
    <property type="entry name" value="Viral_ssDBP_head"/>
</dbReference>
<dbReference type="InterPro" id="IPR000635">
    <property type="entry name" value="Viral_ssDNA-bd"/>
</dbReference>
<dbReference type="Pfam" id="PF00747">
    <property type="entry name" value="Viral_DNA_bp"/>
    <property type="match status" value="1"/>
</dbReference>
<dbReference type="SUPFAM" id="SSF118208">
    <property type="entry name" value="Viral ssDNA binding protein"/>
    <property type="match status" value="1"/>
</dbReference>
<gene>
    <name evidence="1" type="primary">DBP</name>
    <name type="synonym">ICP8</name>
    <name type="ORF">UL29</name>
</gene>
<reference key="1">
    <citation type="journal article" date="2004" name="J. Virol.">
        <title>Complete, annotated sequence of the pseudorabies virus genome.</title>
        <authorList>
            <person name="Klupp B.G."/>
            <person name="Hengartner C.J."/>
            <person name="Mettenleiter T.C."/>
            <person name="Enquist L.W."/>
        </authorList>
    </citation>
    <scope>NUCLEOTIDE SEQUENCE [GENOMIC DNA]</scope>
</reference>
<reference key="2">
    <citation type="journal article" date="1989" name="Nucleic Acids Res.">
        <title>The nucleotide sequence of a pseudorabies virus gene similar to ICP18.5 of herpes simplex virus type 1.</title>
        <authorList>
            <person name="Pederson N.E."/>
            <person name="Enquist L.W."/>
        </authorList>
    </citation>
    <scope>NUCLEOTIDE SEQUENCE [GENOMIC DNA] OF 1-66</scope>
    <source>
        <strain>pPRS3</strain>
    </source>
</reference>